<evidence type="ECO:0000250" key="1"/>
<evidence type="ECO:0000250" key="2">
    <source>
        <dbReference type="UniProtKB" id="P40073"/>
    </source>
</evidence>
<evidence type="ECO:0000255" key="3"/>
<evidence type="ECO:0000255" key="4">
    <source>
        <dbReference type="PROSITE-ProRule" id="PRU00192"/>
    </source>
</evidence>
<evidence type="ECO:0000256" key="5">
    <source>
        <dbReference type="SAM" id="MobiDB-lite"/>
    </source>
</evidence>
<evidence type="ECO:0000305" key="6"/>
<name>SHO1_YEAS7</name>
<dbReference type="EMBL" id="AAFW02000048">
    <property type="protein sequence ID" value="EDN63093.1"/>
    <property type="molecule type" value="Genomic_DNA"/>
</dbReference>
<dbReference type="SMR" id="A6ZR73"/>
<dbReference type="GlyCosmos" id="A6ZR73">
    <property type="glycosylation" value="1 site, No reported glycans"/>
</dbReference>
<dbReference type="HOGENOM" id="CLU_043316_0_0_1"/>
<dbReference type="OrthoDB" id="3664at4893"/>
<dbReference type="Proteomes" id="UP000007060">
    <property type="component" value="Unassembled WGS sequence"/>
</dbReference>
<dbReference type="GO" id="GO:0042995">
    <property type="term" value="C:cell projection"/>
    <property type="evidence" value="ECO:0007669"/>
    <property type="project" value="UniProtKB-SubCell"/>
</dbReference>
<dbReference type="GO" id="GO:0005935">
    <property type="term" value="C:cellular bud neck"/>
    <property type="evidence" value="ECO:0007669"/>
    <property type="project" value="UniProtKB-SubCell"/>
</dbReference>
<dbReference type="GO" id="GO:0005886">
    <property type="term" value="C:plasma membrane"/>
    <property type="evidence" value="ECO:0007669"/>
    <property type="project" value="UniProtKB-SubCell"/>
</dbReference>
<dbReference type="GO" id="GO:0030833">
    <property type="term" value="P:regulation of actin filament polymerization"/>
    <property type="evidence" value="ECO:0007669"/>
    <property type="project" value="TreeGrafter"/>
</dbReference>
<dbReference type="CDD" id="cd11855">
    <property type="entry name" value="SH3_Sho1p"/>
    <property type="match status" value="1"/>
</dbReference>
<dbReference type="FunFam" id="2.30.30.40:FF:000213">
    <property type="entry name" value="High osmolarity signaling protein SHO1"/>
    <property type="match status" value="1"/>
</dbReference>
<dbReference type="Gene3D" id="2.30.30.40">
    <property type="entry name" value="SH3 Domains"/>
    <property type="match status" value="1"/>
</dbReference>
<dbReference type="InterPro" id="IPR036028">
    <property type="entry name" value="SH3-like_dom_sf"/>
</dbReference>
<dbReference type="InterPro" id="IPR001452">
    <property type="entry name" value="SH3_domain"/>
</dbReference>
<dbReference type="InterPro" id="IPR035522">
    <property type="entry name" value="Sho1_SH3"/>
</dbReference>
<dbReference type="PANTHER" id="PTHR15735">
    <property type="entry name" value="FCH AND DOUBLE SH3 DOMAINS PROTEIN"/>
    <property type="match status" value="1"/>
</dbReference>
<dbReference type="PANTHER" id="PTHR15735:SF20">
    <property type="entry name" value="HIGH OSMOLARITY SIGNALING PROTEIN SHO1"/>
    <property type="match status" value="1"/>
</dbReference>
<dbReference type="Pfam" id="PF00018">
    <property type="entry name" value="SH3_1"/>
    <property type="match status" value="1"/>
</dbReference>
<dbReference type="PRINTS" id="PR00452">
    <property type="entry name" value="SH3DOMAIN"/>
</dbReference>
<dbReference type="SMART" id="SM00326">
    <property type="entry name" value="SH3"/>
    <property type="match status" value="1"/>
</dbReference>
<dbReference type="SUPFAM" id="SSF50044">
    <property type="entry name" value="SH3-domain"/>
    <property type="match status" value="1"/>
</dbReference>
<dbReference type="PROSITE" id="PS50002">
    <property type="entry name" value="SH3"/>
    <property type="match status" value="1"/>
</dbReference>
<keyword id="KW-1003">Cell membrane</keyword>
<keyword id="KW-0966">Cell projection</keyword>
<keyword id="KW-0325">Glycoprotein</keyword>
<keyword id="KW-0472">Membrane</keyword>
<keyword id="KW-0597">Phosphoprotein</keyword>
<keyword id="KW-0728">SH3 domain</keyword>
<keyword id="KW-0346">Stress response</keyword>
<keyword id="KW-0812">Transmembrane</keyword>
<keyword id="KW-1133">Transmembrane helix</keyword>
<reference key="1">
    <citation type="journal article" date="2007" name="Proc. Natl. Acad. Sci. U.S.A.">
        <title>Genome sequencing and comparative analysis of Saccharomyces cerevisiae strain YJM789.</title>
        <authorList>
            <person name="Wei W."/>
            <person name="McCusker J.H."/>
            <person name="Hyman R.W."/>
            <person name="Jones T."/>
            <person name="Ning Y."/>
            <person name="Cao Z."/>
            <person name="Gu Z."/>
            <person name="Bruno D."/>
            <person name="Miranda M."/>
            <person name="Nguyen M."/>
            <person name="Wilhelmy J."/>
            <person name="Komp C."/>
            <person name="Tamse R."/>
            <person name="Wang X."/>
            <person name="Jia P."/>
            <person name="Luedi P."/>
            <person name="Oefner P.J."/>
            <person name="David L."/>
            <person name="Dietrich F.S."/>
            <person name="Li Y."/>
            <person name="Davis R.W."/>
            <person name="Steinmetz L.M."/>
        </authorList>
    </citation>
    <scope>NUCLEOTIDE SEQUENCE [LARGE SCALE GENOMIC DNA]</scope>
    <source>
        <strain>YJM789</strain>
    </source>
</reference>
<sequence>MSISSKIRPTPRKPSRMATDHSFKMKNFYADPFAISSISLAIVSWVIAIGGSISSASTNESFPRFTWWGIVYQFLTICSLMLFYCFDLVDHYRIFITTSIAVAFVYNTNSATNLVYADGSKKAAASAGVILLSIINLIWILYYGGDNASPTNRWIDSFSIKGIRPSPLENSLHRARRRGNRNTTPYQNNVYNDAIRDSGYATQFDGYPQQQPSHTNYVSSTALAGFENTQPNTSEAVNLHLNTLQQHINSASNAKETNDNSNNQTNTNIGNTFDTDFSNGNTETTMGDTLGLYSDIGDDNFIYKAKALYPYDADDDDAYEISFEQNEILQVSDIEGRWWKARRANGETGIIPSNYVQLIDGPEEMHR</sequence>
<proteinExistence type="inferred from homology"/>
<feature type="chain" id="PRO_0000410411" description="High osmolarity signaling protein SHO1">
    <location>
        <begin position="1"/>
        <end position="367"/>
    </location>
</feature>
<feature type="topological domain" description="Cytoplasmic" evidence="3">
    <location>
        <begin position="1"/>
        <end position="32"/>
    </location>
</feature>
<feature type="transmembrane region" description="Helical" evidence="3">
    <location>
        <begin position="33"/>
        <end position="53"/>
    </location>
</feature>
<feature type="topological domain" description="Extracellular" evidence="3">
    <location>
        <begin position="54"/>
        <end position="65"/>
    </location>
</feature>
<feature type="transmembrane region" description="Helical" evidence="3">
    <location>
        <begin position="66"/>
        <end position="86"/>
    </location>
</feature>
<feature type="topological domain" description="Cytoplasmic" evidence="3">
    <location>
        <begin position="87"/>
        <end position="93"/>
    </location>
</feature>
<feature type="transmembrane region" description="Helical" evidence="3">
    <location>
        <begin position="94"/>
        <end position="114"/>
    </location>
</feature>
<feature type="topological domain" description="Extracellular" evidence="3">
    <location>
        <begin position="115"/>
        <end position="122"/>
    </location>
</feature>
<feature type="transmembrane region" description="Helical" evidence="3">
    <location>
        <begin position="123"/>
        <end position="143"/>
    </location>
</feature>
<feature type="topological domain" description="Cytoplasmic" evidence="3">
    <location>
        <begin position="144"/>
        <end position="367"/>
    </location>
</feature>
<feature type="domain" description="SH3" evidence="4">
    <location>
        <begin position="300"/>
        <end position="361"/>
    </location>
</feature>
<feature type="region of interest" description="Disordered" evidence="5">
    <location>
        <begin position="253"/>
        <end position="276"/>
    </location>
</feature>
<feature type="compositionally biased region" description="Low complexity" evidence="5">
    <location>
        <begin position="259"/>
        <end position="272"/>
    </location>
</feature>
<feature type="modified residue" description="Phosphoserine" evidence="2">
    <location>
        <position position="166"/>
    </location>
</feature>
<feature type="glycosylation site" description="N-linked (GlcNAc...) asparagine" evidence="3">
    <location>
        <position position="59"/>
    </location>
</feature>
<protein>
    <recommendedName>
        <fullName>High osmolarity signaling protein SHO1</fullName>
    </recommendedName>
    <alternativeName>
        <fullName>Osmosensor SHO1</fullName>
    </alternativeName>
    <alternativeName>
        <fullName>Suppressor of SUA8-1 mutation</fullName>
    </alternativeName>
    <alternativeName>
        <fullName>Synthetic high osmolarity-sensitive protein 1</fullName>
    </alternativeName>
</protein>
<gene>
    <name type="primary">SHO1</name>
    <name type="synonym">SSU81</name>
    <name type="ORF">SCY_1620</name>
</gene>
<comment type="function">
    <text evidence="1">Plasma membrane osmosensor that activates the high osmolarity glycerol (HOG) MAPK signaling pathway in response to high osmolarity. Detects changes in external osmolarity and activates PBS2 through the stimulation of STE11 and targets PBS2 to the plasma membrane. PBS2 activation leads to changes in glycerol production that helps to balance the intracellular and external osmotic pressures. Activates also HOG1 in response to heat stress and mediates resistance to oxidative stress. Involved in the regulation of the mating pathway. May be a receptor that feeds into the pseudohyphal growth pathway (By similarity).</text>
</comment>
<comment type="subunit">
    <text evidence="1">Forms homooligomers (By similarity). Interacts (via the SH3 domain) with PBS2. Interacts with FUS1, STE11, STE50 and RNA polymerase II (By similarity).</text>
</comment>
<comment type="subcellular location">
    <subcellularLocation>
        <location evidence="1">Cell membrane</location>
        <topology evidence="1">Multi-pass membrane protein</topology>
    </subcellularLocation>
    <subcellularLocation>
        <location evidence="1">Bud</location>
    </subcellularLocation>
    <subcellularLocation>
        <location evidence="1">Bud neck</location>
    </subcellularLocation>
    <subcellularLocation>
        <location evidence="1">Cell projection</location>
    </subcellularLocation>
    <text evidence="1">Localizes at the tip of the mating projection during conjugation.</text>
</comment>
<comment type="similarity">
    <text evidence="6">Belongs to the SHO1 family.</text>
</comment>
<accession>A6ZR73</accession>
<organism>
    <name type="scientific">Saccharomyces cerevisiae (strain YJM789)</name>
    <name type="common">Baker's yeast</name>
    <dbReference type="NCBI Taxonomy" id="307796"/>
    <lineage>
        <taxon>Eukaryota</taxon>
        <taxon>Fungi</taxon>
        <taxon>Dikarya</taxon>
        <taxon>Ascomycota</taxon>
        <taxon>Saccharomycotina</taxon>
        <taxon>Saccharomycetes</taxon>
        <taxon>Saccharomycetales</taxon>
        <taxon>Saccharomycetaceae</taxon>
        <taxon>Saccharomyces</taxon>
    </lineage>
</organism>